<gene>
    <name evidence="1" type="primary">purC</name>
    <name type="ordered locus">XOO4054</name>
</gene>
<protein>
    <recommendedName>
        <fullName evidence="1">Phosphoribosylaminoimidazole-succinocarboxamide synthase</fullName>
        <ecNumber evidence="1">6.3.2.6</ecNumber>
    </recommendedName>
    <alternativeName>
        <fullName evidence="1">SAICAR synthetase</fullName>
    </alternativeName>
</protein>
<sequence length="310" mass="34483">MPVSTTLLQSDLPGLPLRHRGKVRDVFDIPRDRLPADAPPGDYLLMVATDRLSAFDVVLPDPIPGKGEMLCQVSNFWFHKTEHLMPNHLVDIRVEQVLPEGVDPALYAKRAVVTRKLKPVPVEAIARGYLIGSGWKDYQRTGKISGIELPDGLRQAEKLPEPIFTPSTKAAVGDHDENIDFDAMVKTVGAELAERVRDATLRIYRFAADFAAECGILLADTKFEFGTDADGRLYVMDEMLTPDSSRYWPADQYELGTSPPSYDKQFVRDYLETLDWGKTAPGPSLPADVIDRTRAKYAEALQRLAGISVD</sequence>
<proteinExistence type="inferred from homology"/>
<name>PUR7_XANOR</name>
<dbReference type="EC" id="6.3.2.6" evidence="1"/>
<dbReference type="EMBL" id="AE013598">
    <property type="protein sequence ID" value="AAW77308.1"/>
    <property type="molecule type" value="Genomic_DNA"/>
</dbReference>
<dbReference type="SMR" id="Q5GVG5"/>
<dbReference type="STRING" id="291331.XOO4054"/>
<dbReference type="KEGG" id="xoo:XOO4054"/>
<dbReference type="HOGENOM" id="CLU_045637_0_0_6"/>
<dbReference type="UniPathway" id="UPA00074">
    <property type="reaction ID" value="UER00131"/>
</dbReference>
<dbReference type="Proteomes" id="UP000006735">
    <property type="component" value="Chromosome"/>
</dbReference>
<dbReference type="GO" id="GO:0005737">
    <property type="term" value="C:cytoplasm"/>
    <property type="evidence" value="ECO:0007669"/>
    <property type="project" value="TreeGrafter"/>
</dbReference>
<dbReference type="GO" id="GO:0005524">
    <property type="term" value="F:ATP binding"/>
    <property type="evidence" value="ECO:0007669"/>
    <property type="project" value="UniProtKB-KW"/>
</dbReference>
<dbReference type="GO" id="GO:0004639">
    <property type="term" value="F:phosphoribosylaminoimidazolesuccinocarboxamide synthase activity"/>
    <property type="evidence" value="ECO:0007669"/>
    <property type="project" value="UniProtKB-UniRule"/>
</dbReference>
<dbReference type="GO" id="GO:0006189">
    <property type="term" value="P:'de novo' IMP biosynthetic process"/>
    <property type="evidence" value="ECO:0007669"/>
    <property type="project" value="UniProtKB-UniRule"/>
</dbReference>
<dbReference type="CDD" id="cd01414">
    <property type="entry name" value="SAICAR_synt_Sc"/>
    <property type="match status" value="1"/>
</dbReference>
<dbReference type="FunFam" id="3.30.200.20:FF:000365">
    <property type="entry name" value="Phosphoribosylaminoimidazole-succinocarboxamide synthase"/>
    <property type="match status" value="1"/>
</dbReference>
<dbReference type="FunFam" id="3.30.470.20:FF:000015">
    <property type="entry name" value="Phosphoribosylaminoimidazole-succinocarboxamide synthase"/>
    <property type="match status" value="1"/>
</dbReference>
<dbReference type="Gene3D" id="3.30.470.20">
    <property type="entry name" value="ATP-grasp fold, B domain"/>
    <property type="match status" value="1"/>
</dbReference>
<dbReference type="Gene3D" id="3.30.200.20">
    <property type="entry name" value="Phosphorylase Kinase, domain 1"/>
    <property type="match status" value="1"/>
</dbReference>
<dbReference type="HAMAP" id="MF_00137">
    <property type="entry name" value="SAICAR_synth"/>
    <property type="match status" value="1"/>
</dbReference>
<dbReference type="InterPro" id="IPR028923">
    <property type="entry name" value="SAICAR_synt/ADE2_N"/>
</dbReference>
<dbReference type="InterPro" id="IPR001636">
    <property type="entry name" value="SAICAR_synth"/>
</dbReference>
<dbReference type="InterPro" id="IPR018236">
    <property type="entry name" value="SAICAR_synthetase_CS"/>
</dbReference>
<dbReference type="NCBIfam" id="NF010568">
    <property type="entry name" value="PRK13961.1"/>
    <property type="match status" value="1"/>
</dbReference>
<dbReference type="NCBIfam" id="TIGR00081">
    <property type="entry name" value="purC"/>
    <property type="match status" value="1"/>
</dbReference>
<dbReference type="PANTHER" id="PTHR43700">
    <property type="entry name" value="PHOSPHORIBOSYLAMINOIMIDAZOLE-SUCCINOCARBOXAMIDE SYNTHASE"/>
    <property type="match status" value="1"/>
</dbReference>
<dbReference type="PANTHER" id="PTHR43700:SF1">
    <property type="entry name" value="PHOSPHORIBOSYLAMINOIMIDAZOLE-SUCCINOCARBOXAMIDE SYNTHASE"/>
    <property type="match status" value="1"/>
</dbReference>
<dbReference type="Pfam" id="PF01259">
    <property type="entry name" value="SAICAR_synt"/>
    <property type="match status" value="1"/>
</dbReference>
<dbReference type="SUPFAM" id="SSF56104">
    <property type="entry name" value="SAICAR synthase-like"/>
    <property type="match status" value="1"/>
</dbReference>
<dbReference type="PROSITE" id="PS01057">
    <property type="entry name" value="SAICAR_SYNTHETASE_1"/>
    <property type="match status" value="1"/>
</dbReference>
<dbReference type="PROSITE" id="PS01058">
    <property type="entry name" value="SAICAR_SYNTHETASE_2"/>
    <property type="match status" value="1"/>
</dbReference>
<accession>Q5GVG5</accession>
<evidence type="ECO:0000255" key="1">
    <source>
        <dbReference type="HAMAP-Rule" id="MF_00137"/>
    </source>
</evidence>
<feature type="chain" id="PRO_1000018813" description="Phosphoribosylaminoimidazole-succinocarboxamide synthase">
    <location>
        <begin position="1"/>
        <end position="310"/>
    </location>
</feature>
<keyword id="KW-0067">ATP-binding</keyword>
<keyword id="KW-0436">Ligase</keyword>
<keyword id="KW-0547">Nucleotide-binding</keyword>
<keyword id="KW-0658">Purine biosynthesis</keyword>
<keyword id="KW-1185">Reference proteome</keyword>
<comment type="catalytic activity">
    <reaction evidence="1">
        <text>5-amino-1-(5-phospho-D-ribosyl)imidazole-4-carboxylate + L-aspartate + ATP = (2S)-2-[5-amino-1-(5-phospho-beta-D-ribosyl)imidazole-4-carboxamido]succinate + ADP + phosphate + 2 H(+)</text>
        <dbReference type="Rhea" id="RHEA:22628"/>
        <dbReference type="ChEBI" id="CHEBI:15378"/>
        <dbReference type="ChEBI" id="CHEBI:29991"/>
        <dbReference type="ChEBI" id="CHEBI:30616"/>
        <dbReference type="ChEBI" id="CHEBI:43474"/>
        <dbReference type="ChEBI" id="CHEBI:58443"/>
        <dbReference type="ChEBI" id="CHEBI:77657"/>
        <dbReference type="ChEBI" id="CHEBI:456216"/>
        <dbReference type="EC" id="6.3.2.6"/>
    </reaction>
</comment>
<comment type="pathway">
    <text evidence="1">Purine metabolism; IMP biosynthesis via de novo pathway; 5-amino-1-(5-phospho-D-ribosyl)imidazole-4-carboxamide from 5-amino-1-(5-phospho-D-ribosyl)imidazole-4-carboxylate: step 1/2.</text>
</comment>
<comment type="similarity">
    <text evidence="1">Belongs to the SAICAR synthetase family.</text>
</comment>
<organism>
    <name type="scientific">Xanthomonas oryzae pv. oryzae (strain KACC10331 / KXO85)</name>
    <dbReference type="NCBI Taxonomy" id="291331"/>
    <lineage>
        <taxon>Bacteria</taxon>
        <taxon>Pseudomonadati</taxon>
        <taxon>Pseudomonadota</taxon>
        <taxon>Gammaproteobacteria</taxon>
        <taxon>Lysobacterales</taxon>
        <taxon>Lysobacteraceae</taxon>
        <taxon>Xanthomonas</taxon>
    </lineage>
</organism>
<reference key="1">
    <citation type="journal article" date="2005" name="Nucleic Acids Res.">
        <title>The genome sequence of Xanthomonas oryzae pathovar oryzae KACC10331, the bacterial blight pathogen of rice.</title>
        <authorList>
            <person name="Lee B.-M."/>
            <person name="Park Y.-J."/>
            <person name="Park D.-S."/>
            <person name="Kang H.-W."/>
            <person name="Kim J.-G."/>
            <person name="Song E.-S."/>
            <person name="Park I.-C."/>
            <person name="Yoon U.-H."/>
            <person name="Hahn J.-H."/>
            <person name="Koo B.-S."/>
            <person name="Lee G.-B."/>
            <person name="Kim H."/>
            <person name="Park H.-S."/>
            <person name="Yoon K.-O."/>
            <person name="Kim J.-H."/>
            <person name="Jung C.-H."/>
            <person name="Koh N.-H."/>
            <person name="Seo J.-S."/>
            <person name="Go S.-J."/>
        </authorList>
    </citation>
    <scope>NUCLEOTIDE SEQUENCE [LARGE SCALE GENOMIC DNA]</scope>
    <source>
        <strain>KACC10331 / KXO85</strain>
    </source>
</reference>